<organism>
    <name type="scientific">Aquarana catesbeiana</name>
    <name type="common">American bullfrog</name>
    <name type="synonym">Rana catesbeiana</name>
    <dbReference type="NCBI Taxonomy" id="8400"/>
    <lineage>
        <taxon>Eukaryota</taxon>
        <taxon>Metazoa</taxon>
        <taxon>Chordata</taxon>
        <taxon>Craniata</taxon>
        <taxon>Vertebrata</taxon>
        <taxon>Euteleostomi</taxon>
        <taxon>Amphibia</taxon>
        <taxon>Batrachia</taxon>
        <taxon>Anura</taxon>
        <taxon>Neobatrachia</taxon>
        <taxon>Ranoidea</taxon>
        <taxon>Ranidae</taxon>
        <taxon>Aquarana</taxon>
    </lineage>
</organism>
<reference key="1">
    <citation type="journal article" date="1996" name="J. Protein Chem.">
        <title>Characterization of gamma-crystallin from the eye lens of bullfrog: complexity of gamma-crystallin multigene family as revealed by sequence comparison among different amphibian species.</title>
        <authorList>
            <person name="Lu S.-F."/>
            <person name="Pan F.-M."/>
            <person name="Chiou S.-H."/>
        </authorList>
    </citation>
    <scope>NUCLEOTIDE SEQUENCE [MRNA]</scope>
    <source>
        <tissue>Lens</tissue>
    </source>
</reference>
<keyword id="KW-0273">Eye lens protein</keyword>
<keyword id="KW-0677">Repeat</keyword>
<feature type="chain" id="PRO_0000057571" description="Gamma-crystallin M1-2">
    <location>
        <begin position="1"/>
        <end position="177"/>
    </location>
</feature>
<feature type="domain" description="Beta/gamma crystallin 'Greek key' 1" evidence="2">
    <location>
        <begin position="2"/>
        <end position="40"/>
    </location>
</feature>
<feature type="domain" description="Beta/gamma crystallin 'Greek key' 2" evidence="2">
    <location>
        <begin position="41"/>
        <end position="83"/>
    </location>
</feature>
<feature type="domain" description="Beta/gamma crystallin 'Greek key' 3" evidence="2">
    <location>
        <begin position="91"/>
        <end position="131"/>
    </location>
</feature>
<feature type="domain" description="Beta/gamma crystallin 'Greek key' 4" evidence="2">
    <location>
        <begin position="132"/>
        <end position="174"/>
    </location>
</feature>
<feature type="region of interest" description="Connecting peptide">
    <location>
        <begin position="84"/>
        <end position="90"/>
    </location>
</feature>
<name>CRG12_AQUCT</name>
<accession>Q91321</accession>
<comment type="function">
    <text>Crystallins are the dominant structural components of the vertebrate eye lens.</text>
</comment>
<comment type="subunit">
    <text evidence="1">Monomer.</text>
</comment>
<comment type="domain">
    <text>Has a two-domain beta-structure, folded into four very similar Greek key motifs.</text>
</comment>
<comment type="similarity">
    <text evidence="3">Belongs to the beta/gamma-crystallin family.</text>
</comment>
<proteinExistence type="evidence at transcript level"/>
<protein>
    <recommendedName>
        <fullName>Gamma-crystallin M1-2</fullName>
        <shortName>Gamma M1-2</shortName>
    </recommendedName>
</protein>
<dbReference type="EMBL" id="X86081">
    <property type="protein sequence ID" value="CAA60036.1"/>
    <property type="molecule type" value="mRNA"/>
</dbReference>
<dbReference type="PIR" id="S52843">
    <property type="entry name" value="S52843"/>
</dbReference>
<dbReference type="SMR" id="Q91321"/>
<dbReference type="GO" id="GO:0005212">
    <property type="term" value="F:structural constituent of eye lens"/>
    <property type="evidence" value="ECO:0007669"/>
    <property type="project" value="UniProtKB-KW"/>
</dbReference>
<dbReference type="GO" id="GO:0002088">
    <property type="term" value="P:lens development in camera-type eye"/>
    <property type="evidence" value="ECO:0007669"/>
    <property type="project" value="TreeGrafter"/>
</dbReference>
<dbReference type="GO" id="GO:0007601">
    <property type="term" value="P:visual perception"/>
    <property type="evidence" value="ECO:0007669"/>
    <property type="project" value="TreeGrafter"/>
</dbReference>
<dbReference type="FunFam" id="2.60.20.10:FF:000001">
    <property type="entry name" value="Crystallin gamma S"/>
    <property type="match status" value="1"/>
</dbReference>
<dbReference type="FunFam" id="2.60.20.10:FF:000003">
    <property type="entry name" value="Crystallin gamma S"/>
    <property type="match status" value="1"/>
</dbReference>
<dbReference type="Gene3D" id="2.60.20.10">
    <property type="entry name" value="Crystallins"/>
    <property type="match status" value="2"/>
</dbReference>
<dbReference type="InterPro" id="IPR050252">
    <property type="entry name" value="Beta/Gamma-Crystallin"/>
</dbReference>
<dbReference type="InterPro" id="IPR001064">
    <property type="entry name" value="Beta/gamma_crystallin"/>
</dbReference>
<dbReference type="InterPro" id="IPR011024">
    <property type="entry name" value="G_crystallin-like"/>
</dbReference>
<dbReference type="PANTHER" id="PTHR11818">
    <property type="entry name" value="BETA/GAMMA CRYSTALLIN"/>
    <property type="match status" value="1"/>
</dbReference>
<dbReference type="PANTHER" id="PTHR11818:SF119">
    <property type="entry name" value="GAMMA-CRYSTALLIN D"/>
    <property type="match status" value="1"/>
</dbReference>
<dbReference type="Pfam" id="PF00030">
    <property type="entry name" value="Crystall"/>
    <property type="match status" value="2"/>
</dbReference>
<dbReference type="PRINTS" id="PR01367">
    <property type="entry name" value="BGCRYSTALLIN"/>
</dbReference>
<dbReference type="SMART" id="SM00247">
    <property type="entry name" value="XTALbg"/>
    <property type="match status" value="2"/>
</dbReference>
<dbReference type="SUPFAM" id="SSF49695">
    <property type="entry name" value="gamma-Crystallin-like"/>
    <property type="match status" value="1"/>
</dbReference>
<dbReference type="PROSITE" id="PS50915">
    <property type="entry name" value="CRYSTALLIN_BETA_GAMMA"/>
    <property type="match status" value="4"/>
</dbReference>
<sequence>MGKIIFYEDRNFQGRSYECSNDNPDLQPNFNACNSVRVENGCWMIYERPNYMGHQYFLKRGEYPDYQQCQGLNDSPQSSRLLSQNLGIGTNKLRVYERGDSKGEMMEFLEDCPNVYDRFCSHEIHSCNVLDGYWIFYELPNYKGKQYLLRPGEYKRFTDWGSQTAKVGSFRRVIGIC</sequence>
<evidence type="ECO:0000250" key="1"/>
<evidence type="ECO:0000255" key="2">
    <source>
        <dbReference type="PROSITE-ProRule" id="PRU00028"/>
    </source>
</evidence>
<evidence type="ECO:0000305" key="3"/>